<accession>B7MPH7</accession>
<feature type="chain" id="PRO_0000374295" description="tRNA-2-methylthio-N(6)-dimethylallyladenosine synthase">
    <location>
        <begin position="1"/>
        <end position="474"/>
    </location>
</feature>
<feature type="domain" description="MTTase N-terminal" evidence="1">
    <location>
        <begin position="3"/>
        <end position="120"/>
    </location>
</feature>
<feature type="domain" description="Radical SAM core" evidence="2">
    <location>
        <begin position="143"/>
        <end position="375"/>
    </location>
</feature>
<feature type="domain" description="TRAM" evidence="1">
    <location>
        <begin position="378"/>
        <end position="441"/>
    </location>
</feature>
<feature type="binding site" evidence="1">
    <location>
        <position position="12"/>
    </location>
    <ligand>
        <name>[4Fe-4S] cluster</name>
        <dbReference type="ChEBI" id="CHEBI:49883"/>
        <label>1</label>
    </ligand>
</feature>
<feature type="binding site" evidence="1">
    <location>
        <position position="49"/>
    </location>
    <ligand>
        <name>[4Fe-4S] cluster</name>
        <dbReference type="ChEBI" id="CHEBI:49883"/>
        <label>1</label>
    </ligand>
</feature>
<feature type="binding site" evidence="1">
    <location>
        <position position="83"/>
    </location>
    <ligand>
        <name>[4Fe-4S] cluster</name>
        <dbReference type="ChEBI" id="CHEBI:49883"/>
        <label>1</label>
    </ligand>
</feature>
<feature type="binding site" evidence="1">
    <location>
        <position position="157"/>
    </location>
    <ligand>
        <name>[4Fe-4S] cluster</name>
        <dbReference type="ChEBI" id="CHEBI:49883"/>
        <label>2</label>
        <note>4Fe-4S-S-AdoMet</note>
    </ligand>
</feature>
<feature type="binding site" evidence="1">
    <location>
        <position position="161"/>
    </location>
    <ligand>
        <name>[4Fe-4S] cluster</name>
        <dbReference type="ChEBI" id="CHEBI:49883"/>
        <label>2</label>
        <note>4Fe-4S-S-AdoMet</note>
    </ligand>
</feature>
<feature type="binding site" evidence="1">
    <location>
        <position position="164"/>
    </location>
    <ligand>
        <name>[4Fe-4S] cluster</name>
        <dbReference type="ChEBI" id="CHEBI:49883"/>
        <label>2</label>
        <note>4Fe-4S-S-AdoMet</note>
    </ligand>
</feature>
<reference key="1">
    <citation type="journal article" date="2009" name="PLoS Genet.">
        <title>Organised genome dynamics in the Escherichia coli species results in highly diverse adaptive paths.</title>
        <authorList>
            <person name="Touchon M."/>
            <person name="Hoede C."/>
            <person name="Tenaillon O."/>
            <person name="Barbe V."/>
            <person name="Baeriswyl S."/>
            <person name="Bidet P."/>
            <person name="Bingen E."/>
            <person name="Bonacorsi S."/>
            <person name="Bouchier C."/>
            <person name="Bouvet O."/>
            <person name="Calteau A."/>
            <person name="Chiapello H."/>
            <person name="Clermont O."/>
            <person name="Cruveiller S."/>
            <person name="Danchin A."/>
            <person name="Diard M."/>
            <person name="Dossat C."/>
            <person name="Karoui M.E."/>
            <person name="Frapy E."/>
            <person name="Garry L."/>
            <person name="Ghigo J.M."/>
            <person name="Gilles A.M."/>
            <person name="Johnson J."/>
            <person name="Le Bouguenec C."/>
            <person name="Lescat M."/>
            <person name="Mangenot S."/>
            <person name="Martinez-Jehanne V."/>
            <person name="Matic I."/>
            <person name="Nassif X."/>
            <person name="Oztas S."/>
            <person name="Petit M.A."/>
            <person name="Pichon C."/>
            <person name="Rouy Z."/>
            <person name="Ruf C.S."/>
            <person name="Schneider D."/>
            <person name="Tourret J."/>
            <person name="Vacherie B."/>
            <person name="Vallenet D."/>
            <person name="Medigue C."/>
            <person name="Rocha E.P.C."/>
            <person name="Denamur E."/>
        </authorList>
    </citation>
    <scope>NUCLEOTIDE SEQUENCE [LARGE SCALE GENOMIC DNA]</scope>
    <source>
        <strain>ED1a</strain>
    </source>
</reference>
<sequence length="474" mass="53677">MTKKLHIKTWGCQMNEYDSSKMADLLDATHGYQLTDVAEEADVLLLNTCSIREKAQEKVFHQLGRWKLLKEKNPDLIIGVGGCVASQEGEHIRQRAHYVDIIFGPQTLHRLPEMINSVRGDRSPVVDISFPEIEKFDRLPEPRAEGPTAFVSIMEGCNKYCTYCVVPYTRGEEVSRPSDDILFEIAQLAAQGVREVNLLGQNVNAWRGENYDGTTGTFADLLRLVAAIDGIDRIRFTTSHPIEFTDDIIEVYRDTPELVSFLHLPVQSGSDRILNLMGRTHTALEYKAIIRKLRAARPDIQISSDFIVGFPGETTEDFEKTMKLIADVNFDMSYSFIFSARPGTPAADMVDDVPEEEKKQRLYILQERINQQAMAWSRRMLGTTQRILVEGTSRKSIMELSGRTENNRVVNFEGTPDMIGKFVDVEITDVYPNSLRGKVVRTEDEMGLRVAETPESVIARTRKENDLGVGYYQP</sequence>
<name>MIAB_ECO81</name>
<evidence type="ECO:0000255" key="1">
    <source>
        <dbReference type="HAMAP-Rule" id="MF_01864"/>
    </source>
</evidence>
<evidence type="ECO:0000255" key="2">
    <source>
        <dbReference type="PROSITE-ProRule" id="PRU01266"/>
    </source>
</evidence>
<organism>
    <name type="scientific">Escherichia coli O81 (strain ED1a)</name>
    <dbReference type="NCBI Taxonomy" id="585397"/>
    <lineage>
        <taxon>Bacteria</taxon>
        <taxon>Pseudomonadati</taxon>
        <taxon>Pseudomonadota</taxon>
        <taxon>Gammaproteobacteria</taxon>
        <taxon>Enterobacterales</taxon>
        <taxon>Enterobacteriaceae</taxon>
        <taxon>Escherichia</taxon>
    </lineage>
</organism>
<protein>
    <recommendedName>
        <fullName evidence="1">tRNA-2-methylthio-N(6)-dimethylallyladenosine synthase</fullName>
        <ecNumber evidence="1">2.8.4.3</ecNumber>
    </recommendedName>
    <alternativeName>
        <fullName evidence="1">(Dimethylallyl)adenosine tRNA methylthiotransferase MiaB</fullName>
    </alternativeName>
    <alternativeName>
        <fullName evidence="1">tRNA-i(6)A37 methylthiotransferase</fullName>
    </alternativeName>
</protein>
<comment type="function">
    <text evidence="1">Catalyzes the methylthiolation of N6-(dimethylallyl)adenosine (i(6)A), leading to the formation of 2-methylthio-N6-(dimethylallyl)adenosine (ms(2)i(6)A) at position 37 in tRNAs that read codons beginning with uridine.</text>
</comment>
<comment type="catalytic activity">
    <reaction evidence="1">
        <text>N(6)-dimethylallyladenosine(37) in tRNA + (sulfur carrier)-SH + AH2 + 2 S-adenosyl-L-methionine = 2-methylsulfanyl-N(6)-dimethylallyladenosine(37) in tRNA + (sulfur carrier)-H + 5'-deoxyadenosine + L-methionine + A + S-adenosyl-L-homocysteine + 2 H(+)</text>
        <dbReference type="Rhea" id="RHEA:37067"/>
        <dbReference type="Rhea" id="RHEA-COMP:10375"/>
        <dbReference type="Rhea" id="RHEA-COMP:10376"/>
        <dbReference type="Rhea" id="RHEA-COMP:14737"/>
        <dbReference type="Rhea" id="RHEA-COMP:14739"/>
        <dbReference type="ChEBI" id="CHEBI:13193"/>
        <dbReference type="ChEBI" id="CHEBI:15378"/>
        <dbReference type="ChEBI" id="CHEBI:17319"/>
        <dbReference type="ChEBI" id="CHEBI:17499"/>
        <dbReference type="ChEBI" id="CHEBI:29917"/>
        <dbReference type="ChEBI" id="CHEBI:57844"/>
        <dbReference type="ChEBI" id="CHEBI:57856"/>
        <dbReference type="ChEBI" id="CHEBI:59789"/>
        <dbReference type="ChEBI" id="CHEBI:64428"/>
        <dbReference type="ChEBI" id="CHEBI:74415"/>
        <dbReference type="ChEBI" id="CHEBI:74417"/>
        <dbReference type="EC" id="2.8.4.3"/>
    </reaction>
</comment>
<comment type="cofactor">
    <cofactor evidence="1">
        <name>[4Fe-4S] cluster</name>
        <dbReference type="ChEBI" id="CHEBI:49883"/>
    </cofactor>
    <text evidence="1">Binds 2 [4Fe-4S] clusters. One cluster is coordinated with 3 cysteines and an exchangeable S-adenosyl-L-methionine.</text>
</comment>
<comment type="subunit">
    <text evidence="1">Monomer.</text>
</comment>
<comment type="subcellular location">
    <subcellularLocation>
        <location evidence="1">Cytoplasm</location>
    </subcellularLocation>
</comment>
<comment type="similarity">
    <text evidence="1">Belongs to the methylthiotransferase family. MiaB subfamily.</text>
</comment>
<gene>
    <name evidence="1" type="primary">miaB</name>
    <name type="ordered locus">ECED1_0652</name>
</gene>
<keyword id="KW-0004">4Fe-4S</keyword>
<keyword id="KW-0963">Cytoplasm</keyword>
<keyword id="KW-0408">Iron</keyword>
<keyword id="KW-0411">Iron-sulfur</keyword>
<keyword id="KW-0479">Metal-binding</keyword>
<keyword id="KW-0949">S-adenosyl-L-methionine</keyword>
<keyword id="KW-0808">Transferase</keyword>
<keyword id="KW-0819">tRNA processing</keyword>
<proteinExistence type="inferred from homology"/>
<dbReference type="EC" id="2.8.4.3" evidence="1"/>
<dbReference type="EMBL" id="CU928162">
    <property type="protein sequence ID" value="CAR06859.1"/>
    <property type="molecule type" value="Genomic_DNA"/>
</dbReference>
<dbReference type="RefSeq" id="WP_000162748.1">
    <property type="nucleotide sequence ID" value="NC_011745.1"/>
</dbReference>
<dbReference type="SMR" id="B7MPH7"/>
<dbReference type="KEGG" id="ecq:ECED1_0652"/>
<dbReference type="HOGENOM" id="CLU_018697_2_0_6"/>
<dbReference type="Proteomes" id="UP000000748">
    <property type="component" value="Chromosome"/>
</dbReference>
<dbReference type="GO" id="GO:0005829">
    <property type="term" value="C:cytosol"/>
    <property type="evidence" value="ECO:0007669"/>
    <property type="project" value="TreeGrafter"/>
</dbReference>
<dbReference type="GO" id="GO:0051539">
    <property type="term" value="F:4 iron, 4 sulfur cluster binding"/>
    <property type="evidence" value="ECO:0007669"/>
    <property type="project" value="UniProtKB-UniRule"/>
</dbReference>
<dbReference type="GO" id="GO:0046872">
    <property type="term" value="F:metal ion binding"/>
    <property type="evidence" value="ECO:0007669"/>
    <property type="project" value="UniProtKB-KW"/>
</dbReference>
<dbReference type="GO" id="GO:0035597">
    <property type="term" value="F:N6-isopentenyladenosine methylthiotransferase activity"/>
    <property type="evidence" value="ECO:0007669"/>
    <property type="project" value="TreeGrafter"/>
</dbReference>
<dbReference type="CDD" id="cd01335">
    <property type="entry name" value="Radical_SAM"/>
    <property type="match status" value="1"/>
</dbReference>
<dbReference type="FunFam" id="3.40.50.12160:FF:000001">
    <property type="entry name" value="tRNA-2-methylthio-N(6)-dimethylallyladenosine synthase"/>
    <property type="match status" value="1"/>
</dbReference>
<dbReference type="FunFam" id="3.80.30.20:FF:000001">
    <property type="entry name" value="tRNA-2-methylthio-N(6)-dimethylallyladenosine synthase 2"/>
    <property type="match status" value="1"/>
</dbReference>
<dbReference type="Gene3D" id="3.40.50.12160">
    <property type="entry name" value="Methylthiotransferase, N-terminal domain"/>
    <property type="match status" value="1"/>
</dbReference>
<dbReference type="Gene3D" id="3.80.30.20">
    <property type="entry name" value="tm_1862 like domain"/>
    <property type="match status" value="1"/>
</dbReference>
<dbReference type="HAMAP" id="MF_01864">
    <property type="entry name" value="tRNA_metthiotr_MiaB"/>
    <property type="match status" value="1"/>
</dbReference>
<dbReference type="InterPro" id="IPR006638">
    <property type="entry name" value="Elp3/MiaA/NifB-like_rSAM"/>
</dbReference>
<dbReference type="InterPro" id="IPR005839">
    <property type="entry name" value="Methylthiotransferase"/>
</dbReference>
<dbReference type="InterPro" id="IPR020612">
    <property type="entry name" value="Methylthiotransferase_CS"/>
</dbReference>
<dbReference type="InterPro" id="IPR013848">
    <property type="entry name" value="Methylthiotransferase_N"/>
</dbReference>
<dbReference type="InterPro" id="IPR038135">
    <property type="entry name" value="Methylthiotransferase_N_sf"/>
</dbReference>
<dbReference type="InterPro" id="IPR006463">
    <property type="entry name" value="MiaB_methiolase"/>
</dbReference>
<dbReference type="InterPro" id="IPR007197">
    <property type="entry name" value="rSAM"/>
</dbReference>
<dbReference type="InterPro" id="IPR023404">
    <property type="entry name" value="rSAM_horseshoe"/>
</dbReference>
<dbReference type="InterPro" id="IPR002792">
    <property type="entry name" value="TRAM_dom"/>
</dbReference>
<dbReference type="NCBIfam" id="TIGR01574">
    <property type="entry name" value="miaB-methiolase"/>
    <property type="match status" value="1"/>
</dbReference>
<dbReference type="NCBIfam" id="TIGR00089">
    <property type="entry name" value="MiaB/RimO family radical SAM methylthiotransferase"/>
    <property type="match status" value="1"/>
</dbReference>
<dbReference type="PANTHER" id="PTHR43020">
    <property type="entry name" value="CDK5 REGULATORY SUBUNIT-ASSOCIATED PROTEIN 1"/>
    <property type="match status" value="1"/>
</dbReference>
<dbReference type="PANTHER" id="PTHR43020:SF2">
    <property type="entry name" value="MITOCHONDRIAL TRNA METHYLTHIOTRANSFERASE CDK5RAP1"/>
    <property type="match status" value="1"/>
</dbReference>
<dbReference type="Pfam" id="PF04055">
    <property type="entry name" value="Radical_SAM"/>
    <property type="match status" value="1"/>
</dbReference>
<dbReference type="Pfam" id="PF01938">
    <property type="entry name" value="TRAM"/>
    <property type="match status" value="1"/>
</dbReference>
<dbReference type="Pfam" id="PF00919">
    <property type="entry name" value="UPF0004"/>
    <property type="match status" value="1"/>
</dbReference>
<dbReference type="SFLD" id="SFLDF00273">
    <property type="entry name" value="(dimethylallyl)adenosine_tRNA"/>
    <property type="match status" value="1"/>
</dbReference>
<dbReference type="SFLD" id="SFLDG01082">
    <property type="entry name" value="B12-binding_domain_containing"/>
    <property type="match status" value="1"/>
</dbReference>
<dbReference type="SFLD" id="SFLDG01061">
    <property type="entry name" value="methylthiotransferase"/>
    <property type="match status" value="1"/>
</dbReference>
<dbReference type="SMART" id="SM00729">
    <property type="entry name" value="Elp3"/>
    <property type="match status" value="1"/>
</dbReference>
<dbReference type="SUPFAM" id="SSF102114">
    <property type="entry name" value="Radical SAM enzymes"/>
    <property type="match status" value="1"/>
</dbReference>
<dbReference type="PROSITE" id="PS51449">
    <property type="entry name" value="MTTASE_N"/>
    <property type="match status" value="1"/>
</dbReference>
<dbReference type="PROSITE" id="PS01278">
    <property type="entry name" value="MTTASE_RADICAL"/>
    <property type="match status" value="1"/>
</dbReference>
<dbReference type="PROSITE" id="PS51918">
    <property type="entry name" value="RADICAL_SAM"/>
    <property type="match status" value="1"/>
</dbReference>
<dbReference type="PROSITE" id="PS50926">
    <property type="entry name" value="TRAM"/>
    <property type="match status" value="1"/>
</dbReference>